<feature type="chain" id="PRO_0000137448" description="Eukaryotic translation initiation factor 2 subunit gamma">
    <location>
        <begin position="1"/>
        <end position="527"/>
    </location>
</feature>
<feature type="domain" description="tr-type G" evidence="2">
    <location>
        <begin position="98"/>
        <end position="307"/>
    </location>
</feature>
<feature type="region of interest" description="Disordered" evidence="3">
    <location>
        <begin position="1"/>
        <end position="83"/>
    </location>
</feature>
<feature type="region of interest" description="G1" evidence="2">
    <location>
        <begin position="107"/>
        <end position="114"/>
    </location>
</feature>
<feature type="region of interest" description="G2" evidence="2">
    <location>
        <begin position="135"/>
        <end position="139"/>
    </location>
</feature>
<feature type="region of interest" description="G3" evidence="2">
    <location>
        <begin position="193"/>
        <end position="196"/>
    </location>
</feature>
<feature type="region of interest" description="G4" evidence="2">
    <location>
        <begin position="249"/>
        <end position="252"/>
    </location>
</feature>
<feature type="region of interest" description="G5" evidence="2">
    <location>
        <begin position="284"/>
        <end position="286"/>
    </location>
</feature>
<feature type="region of interest" description="Interacts with CDC123" evidence="10 16">
    <location>
        <begin position="515"/>
        <end position="527"/>
    </location>
</feature>
<feature type="binding site" evidence="12">
    <location>
        <begin position="110"/>
        <end position="115"/>
    </location>
    <ligand>
        <name>GTP</name>
        <dbReference type="ChEBI" id="CHEBI:37565"/>
    </ligand>
</feature>
<feature type="binding site" evidence="12">
    <location>
        <begin position="249"/>
        <end position="252"/>
    </location>
    <ligand>
        <name>GTP</name>
        <dbReference type="ChEBI" id="CHEBI:37565"/>
    </ligand>
</feature>
<feature type="binding site" evidence="12">
    <location>
        <begin position="284"/>
        <end position="286"/>
    </location>
    <ligand>
        <name>GTP</name>
        <dbReference type="ChEBI" id="CHEBI:37565"/>
    </ligand>
</feature>
<feature type="modified residue" description="Phosphothreonine" evidence="23">
    <location>
        <position position="60"/>
    </location>
</feature>
<feature type="modified residue" description="Phosphoserine" evidence="22 23">
    <location>
        <position position="258"/>
    </location>
</feature>
<feature type="mutagenesis site" description="In SUI4; defective in ternary complex formation, correlating with a higher rate of dissociation from charged initiator-tRNA in the absence of GTP hydrolysis." evidence="21">
    <original>N</original>
    <variation>K</variation>
    <location>
        <position position="135"/>
    </location>
</feature>
<feature type="mutagenesis site" description="Reduces the affinity of eIF-2 for Met-tRNAi(Met) without affecting the k(off) value for guanine nucleotides." evidence="20">
    <original>Y</original>
    <variation>H</variation>
    <location>
        <position position="142"/>
    </location>
</feature>
<feature type="mutagenesis site" description="Impairs eIF2 complex function. Reduces cell population growth." evidence="15">
    <original>T</original>
    <variation>A</variation>
    <location>
        <position position="203"/>
    </location>
</feature>
<feature type="mutagenesis site" description="No effect on cell population growth." evidence="15">
    <original>T</original>
    <variation>I</variation>
    <variation>K</variation>
    <location>
        <position position="203"/>
    </location>
</feature>
<feature type="mutagenesis site" description="No effect on cell population growth." evidence="15">
    <original>I</original>
    <variation>A</variation>
    <location>
        <position position="218"/>
    </location>
</feature>
<feature type="mutagenesis site" description="Impairs eIF2 complex function. Strongly reduces cell population growth." evidence="15">
    <original>I</original>
    <variation>L</variation>
    <location>
        <position position="218"/>
    </location>
</feature>
<feature type="mutagenesis site" description="Increases the off-rate for GDP, without altering the apparent dissociation constant for Met-tRNAi(Met). Mimicks the function of the guanine nucleotide exchange factor eIF-2B." evidence="20">
    <original>K</original>
    <variation>R</variation>
    <location>
        <position position="250"/>
    </location>
</feature>
<feature type="mutagenesis site" description="Impairs eIF2 complex formation by impairing binding to SUI3 but not SUI2. Reduces cell population growth." evidence="13 15">
    <original>V</original>
    <variation>K</variation>
    <location>
        <position position="281"/>
    </location>
</feature>
<feature type="mutagenesis site" description="Abolishes binding to SUI3 but not to SUI2 or CDC123. Abolishes interactions with the eIF2B complex subunits GCD6 and GCD7." evidence="16">
    <original>V</original>
    <variation>R</variation>
    <location>
        <position position="281"/>
    </location>
</feature>
<feature type="mutagenesis site" description="No effect on cell population growth." evidence="13">
    <original>V</original>
    <variation>T</variation>
    <location>
        <position position="281"/>
    </location>
</feature>
<feature type="mutagenesis site" description="Mildly impairs eIF2 complex function. No effect on cell population growth." evidence="13">
    <original>I</original>
    <variation>L</variation>
    <location>
        <position position="318"/>
    </location>
</feature>
<feature type="mutagenesis site" description="Impairs binding to methionyl-initiator methionine tRNA and impairs eIF2 complex function. Mildly reduces cell population growth." evidence="13 14 15">
    <original>I</original>
    <variation>M</variation>
    <location>
        <position position="318"/>
    </location>
</feature>
<feature type="mutagenesis site" description="Disrupts binding to CDC123 and SUI2. Does not affect interaction with SUI3." evidence="11">
    <location>
        <begin position="325"/>
        <end position="331"/>
    </location>
</feature>
<feature type="mutagenesis site" description="Abolishes binding to SUI2 but not to SUI3 or CDC123. Abolishes interactions with the eIF2B complex subunits GCD6 and GCD7. Decreases cell population growth." evidence="16">
    <original>D</original>
    <variation>R</variation>
    <location>
        <position position="403"/>
    </location>
</feature>
<feature type="mutagenesis site" description="Mildly impairs eIF2 complex function." evidence="14">
    <original>P</original>
    <variation>S</variation>
    <location>
        <position position="490"/>
    </location>
</feature>
<feature type="mutagenesis site" description="Disrupts binding to CDC123." evidence="11">
    <original>R</original>
    <variation>A</variation>
    <location>
        <position position="504"/>
    </location>
</feature>
<feature type="mutagenesis site" description="Disrupts binding to CDC123." evidence="11">
    <original>W</original>
    <variation>A</variation>
    <location>
        <position position="509"/>
    </location>
</feature>
<feature type="mutagenesis site" description="Disrupts eIF2 complex formation and binding to CDC123." evidence="10 16">
    <location>
        <begin position="515"/>
        <end position="527"/>
    </location>
</feature>
<feature type="helix" evidence="26">
    <location>
        <begin position="61"/>
        <end position="71"/>
    </location>
</feature>
<feature type="helix" evidence="26">
    <location>
        <begin position="84"/>
        <end position="86"/>
    </location>
</feature>
<feature type="helix" evidence="26">
    <location>
        <begin position="92"/>
        <end position="95"/>
    </location>
</feature>
<feature type="strand" evidence="25">
    <location>
        <begin position="101"/>
        <end position="107"/>
    </location>
</feature>
<feature type="helix" evidence="25">
    <location>
        <begin position="113"/>
        <end position="120"/>
    </location>
</feature>
<feature type="strand" evidence="25">
    <location>
        <begin position="121"/>
        <end position="123"/>
    </location>
</feature>
<feature type="strand" evidence="25">
    <location>
        <begin position="129"/>
        <end position="135"/>
    </location>
</feature>
<feature type="strand" evidence="25">
    <location>
        <begin position="142"/>
        <end position="149"/>
    </location>
</feature>
<feature type="strand" evidence="26">
    <location>
        <begin position="153"/>
        <end position="155"/>
    </location>
</feature>
<feature type="helix" evidence="26">
    <location>
        <begin position="157"/>
        <end position="160"/>
    </location>
</feature>
<feature type="strand" evidence="26">
    <location>
        <begin position="162"/>
        <end position="164"/>
    </location>
</feature>
<feature type="strand" evidence="25">
    <location>
        <begin position="184"/>
        <end position="193"/>
    </location>
</feature>
<feature type="strand" evidence="27">
    <location>
        <begin position="197"/>
        <end position="199"/>
    </location>
</feature>
<feature type="helix" evidence="25">
    <location>
        <begin position="202"/>
        <end position="210"/>
    </location>
</feature>
<feature type="strand" evidence="25">
    <location>
        <begin position="212"/>
        <end position="218"/>
    </location>
</feature>
<feature type="strand" evidence="25">
    <location>
        <begin position="220"/>
        <end position="222"/>
    </location>
</feature>
<feature type="helix" evidence="25">
    <location>
        <begin position="227"/>
        <end position="238"/>
    </location>
</feature>
<feature type="strand" evidence="25">
    <location>
        <begin position="244"/>
        <end position="249"/>
    </location>
</feature>
<feature type="strand" evidence="25">
    <location>
        <begin position="251"/>
        <end position="254"/>
    </location>
</feature>
<feature type="helix" evidence="25">
    <location>
        <begin position="256"/>
        <end position="269"/>
    </location>
</feature>
<feature type="strand" evidence="25">
    <location>
        <begin position="272"/>
        <end position="274"/>
    </location>
</feature>
<feature type="strand" evidence="25">
    <location>
        <begin position="280"/>
        <end position="282"/>
    </location>
</feature>
<feature type="turn" evidence="25">
    <location>
        <begin position="285"/>
        <end position="288"/>
    </location>
</feature>
<feature type="helix" evidence="25">
    <location>
        <begin position="292"/>
        <end position="301"/>
    </location>
</feature>
<feature type="strand" evidence="25">
    <location>
        <begin position="309"/>
        <end position="311"/>
    </location>
</feature>
<feature type="strand" evidence="25">
    <location>
        <begin position="314"/>
        <end position="322"/>
    </location>
</feature>
<feature type="strand" evidence="25">
    <location>
        <begin position="326"/>
        <end position="328"/>
    </location>
</feature>
<feature type="strand" evidence="25">
    <location>
        <begin position="336"/>
        <end position="341"/>
    </location>
</feature>
<feature type="strand" evidence="26">
    <location>
        <begin position="347"/>
        <end position="350"/>
    </location>
</feature>
<feature type="strand" evidence="25">
    <location>
        <begin position="352"/>
        <end position="360"/>
    </location>
</feature>
<feature type="strand" evidence="25">
    <location>
        <begin position="370"/>
        <end position="381"/>
    </location>
</feature>
<feature type="strand" evidence="26">
    <location>
        <begin position="385"/>
        <end position="390"/>
    </location>
</feature>
<feature type="strand" evidence="25">
    <location>
        <begin position="394"/>
        <end position="401"/>
    </location>
</feature>
<feature type="turn" evidence="25">
    <location>
        <begin position="404"/>
        <end position="408"/>
    </location>
</feature>
<feature type="strand" evidence="25">
    <location>
        <begin position="412"/>
        <end position="419"/>
    </location>
</feature>
<feature type="strand" evidence="24">
    <location>
        <begin position="425"/>
        <end position="436"/>
    </location>
</feature>
<feature type="strand" evidence="26">
    <location>
        <begin position="446"/>
        <end position="448"/>
    </location>
</feature>
<feature type="strand" evidence="24">
    <location>
        <begin position="460"/>
        <end position="466"/>
    </location>
</feature>
<feature type="strand" evidence="24">
    <location>
        <begin position="469"/>
        <end position="478"/>
    </location>
</feature>
<feature type="strand" evidence="24">
    <location>
        <begin position="480"/>
        <end position="493"/>
    </location>
</feature>
<feature type="strand" evidence="24">
    <location>
        <begin position="498"/>
        <end position="504"/>
    </location>
</feature>
<feature type="strand" evidence="24">
    <location>
        <begin position="506"/>
        <end position="523"/>
    </location>
</feature>
<protein>
    <recommendedName>
        <fullName>Eukaryotic translation initiation factor 2 subunit gamma</fullName>
        <shortName>eIF2-gamma</shortName>
        <ecNumber evidence="19">3.6.5.3</ecNumber>
    </recommendedName>
</protein>
<organism>
    <name type="scientific">Saccharomyces cerevisiae (strain ATCC 204508 / S288c)</name>
    <name type="common">Baker's yeast</name>
    <dbReference type="NCBI Taxonomy" id="559292"/>
    <lineage>
        <taxon>Eukaryota</taxon>
        <taxon>Fungi</taxon>
        <taxon>Dikarya</taxon>
        <taxon>Ascomycota</taxon>
        <taxon>Saccharomycotina</taxon>
        <taxon>Saccharomycetes</taxon>
        <taxon>Saccharomycetales</taxon>
        <taxon>Saccharomycetaceae</taxon>
        <taxon>Saccharomyces</taxon>
    </lineage>
</organism>
<reference key="1">
    <citation type="journal article" date="1993" name="Mol. Cell. Biol.">
        <title>GCD11, a negative regulator of GCN4 expression, encodes the gamma subunit of eIF-2 in Saccharomyces cerevisiae.</title>
        <authorList>
            <person name="Hannig E.M."/>
            <person name="Cigan A.M."/>
            <person name="Freeman B.A."/>
            <person name="Kinzy T.G."/>
        </authorList>
    </citation>
    <scope>NUCLEOTIDE SEQUENCE [GENOMIC DNA]</scope>
</reference>
<reference key="2">
    <citation type="journal article" date="1997" name="Nature">
        <title>The nucleotide sequence of Saccharomyces cerevisiae chromosome V.</title>
        <authorList>
            <person name="Dietrich F.S."/>
            <person name="Mulligan J.T."/>
            <person name="Hennessy K.M."/>
            <person name="Yelton M.A."/>
            <person name="Allen E."/>
            <person name="Araujo R."/>
            <person name="Aviles E."/>
            <person name="Berno A."/>
            <person name="Brennan T."/>
            <person name="Carpenter J."/>
            <person name="Chen E."/>
            <person name="Cherry J.M."/>
            <person name="Chung E."/>
            <person name="Duncan M."/>
            <person name="Guzman E."/>
            <person name="Hartzell G."/>
            <person name="Hunicke-Smith S."/>
            <person name="Hyman R.W."/>
            <person name="Kayser A."/>
            <person name="Komp C."/>
            <person name="Lashkari D."/>
            <person name="Lew H."/>
            <person name="Lin D."/>
            <person name="Mosedale D."/>
            <person name="Nakahara K."/>
            <person name="Namath A."/>
            <person name="Norgren R."/>
            <person name="Oefner P."/>
            <person name="Oh C."/>
            <person name="Petel F.X."/>
            <person name="Roberts D."/>
            <person name="Sehl P."/>
            <person name="Schramm S."/>
            <person name="Shogren T."/>
            <person name="Smith V."/>
            <person name="Taylor P."/>
            <person name="Wei Y."/>
            <person name="Botstein D."/>
            <person name="Davis R.W."/>
        </authorList>
    </citation>
    <scope>NUCLEOTIDE SEQUENCE [LARGE SCALE GENOMIC DNA]</scope>
    <source>
        <strain>ATCC 204508 / S288c</strain>
    </source>
</reference>
<reference key="3">
    <citation type="journal article" date="2014" name="G3 (Bethesda)">
        <title>The reference genome sequence of Saccharomyces cerevisiae: Then and now.</title>
        <authorList>
            <person name="Engel S.R."/>
            <person name="Dietrich F.S."/>
            <person name="Fisk D.G."/>
            <person name="Binkley G."/>
            <person name="Balakrishnan R."/>
            <person name="Costanzo M.C."/>
            <person name="Dwight S.S."/>
            <person name="Hitz B.C."/>
            <person name="Karra K."/>
            <person name="Nash R.S."/>
            <person name="Weng S."/>
            <person name="Wong E.D."/>
            <person name="Lloyd P."/>
            <person name="Skrzypek M.S."/>
            <person name="Miyasato S.R."/>
            <person name="Simison M."/>
            <person name="Cherry J.M."/>
        </authorList>
    </citation>
    <scope>GENOME REANNOTATION</scope>
    <source>
        <strain>ATCC 204508 / S288c</strain>
    </source>
</reference>
<reference key="4">
    <citation type="journal article" date="1985" name="J. Biol. Chem.">
        <title>Purification and properties of eukaryotic initiation factor 2 and its ancillary protein factor (Co-eIF-2A) from yeast Saccharomyces cerevisiae.</title>
        <authorList>
            <person name="Ahmad M.F."/>
            <person name="Nasrin N."/>
            <person name="Banerjee A.C."/>
            <person name="Gupta N.K."/>
        </authorList>
    </citation>
    <scope>FUNCTION</scope>
</reference>
<reference key="5">
    <citation type="journal article" date="1985" name="J. Biol. Chem.">
        <title>A comparative study of the characteristics of eIF-2 and eIF-2-ancillary factor activities from yeast Saccharomyces cerevisiae and rabbit reticulocytes.</title>
        <authorList>
            <person name="Ahmad M.F."/>
            <person name="Nasrin N."/>
            <person name="Bagchi M.K."/>
            <person name="Chakravarty I."/>
            <person name="Gupta N.K."/>
        </authorList>
    </citation>
    <scope>FUNCTION</scope>
    <scope>CATALYTIC ACTIVITY</scope>
</reference>
<reference key="6">
    <citation type="journal article" date="1997" name="Genes Dev.">
        <title>GTP hydrolysis controls stringent selection of the AUG start codon during translation initiation in Saccharomyces cerevisiae.</title>
        <authorList>
            <person name="Huang H.K."/>
            <person name="Yoon H."/>
            <person name="Hannig E.M."/>
            <person name="Donahue T.F."/>
        </authorList>
    </citation>
    <scope>FUNCTION</scope>
    <scope>MUTAGENESIS OF ASN-135</scope>
</reference>
<reference key="7">
    <citation type="journal article" date="1996" name="EMBO J.">
        <title>Ligand interactions with eukaryotic translation initiation factor 2: role of the gamma-subunit.</title>
        <authorList>
            <person name="Erickson F.L."/>
            <person name="Hannig E.M."/>
        </authorList>
    </citation>
    <scope>FUNCTION</scope>
    <scope>MUTAGENESIS OF TYR-142 AND LYS-250</scope>
</reference>
<reference key="8">
    <citation type="journal article" date="2000" name="Genes Dev.">
        <title>A multifactor complex of eukaryotic initiation factors, eIF1, eIF2, eIF3, eIF5, and initiator tRNA(Met) is an important translation initiation intermediate in vivo.</title>
        <authorList>
            <person name="Asano K."/>
            <person name="Clayton J."/>
            <person name="Shalev A."/>
            <person name="Hinnebusch A.G."/>
        </authorList>
    </citation>
    <scope>SUBUNIT</scope>
</reference>
<reference key="9">
    <citation type="journal article" date="2001" name="J. Biol. Chem.">
        <title>Biochemical analysis of the eIF2beta gamma complex reveals a structural function for eIF2alpha in catalyzed nucleotide exchange.</title>
        <authorList>
            <person name="Nika J."/>
            <person name="Rippel S."/>
            <person name="Hannig E.M."/>
        </authorList>
    </citation>
    <scope>FUNCTION</scope>
</reference>
<reference key="10">
    <citation type="journal article" date="2003" name="Nature">
        <title>Global analysis of protein expression in yeast.</title>
        <authorList>
            <person name="Ghaemmaghami S."/>
            <person name="Huh W.-K."/>
            <person name="Bower K."/>
            <person name="Howson R.W."/>
            <person name="Belle A."/>
            <person name="Dephoure N."/>
            <person name="O'Shea E.K."/>
            <person name="Weissman J.S."/>
        </authorList>
    </citation>
    <scope>LEVEL OF PROTEIN EXPRESSION [LARGE SCALE ANALYSIS]</scope>
</reference>
<reference key="11">
    <citation type="journal article" date="2004" name="J. Mol. Biol.">
        <title>GTP-dependent recognition of the methionine moiety on initiator tRNA by translation factor eIF2.</title>
        <authorList>
            <person name="Kapp L.D."/>
            <person name="Lorsch J.R."/>
        </authorList>
    </citation>
    <scope>FUNCTION</scope>
</reference>
<reference key="12">
    <citation type="journal article" date="2005" name="Mol. Cell">
        <title>Pi release from eIF2, not GTP hydrolysis, is the step controlled by start-site selection during eukaryotic translation initiation.</title>
        <authorList>
            <person name="Algire M.A."/>
            <person name="Maag D."/>
            <person name="Lorsch J.R."/>
        </authorList>
    </citation>
    <scope>FUNCTION</scope>
</reference>
<reference key="13">
    <citation type="journal article" date="2006" name="J. Biol. Chem.">
        <title>Direct binding of translation initiation factor eIF2gamma-G domain to its GTPase-activating and GDP-GTP exchange factors eIF5 and eIF2B epsilon.</title>
        <authorList>
            <person name="Alone P.V."/>
            <person name="Dever T.E."/>
        </authorList>
    </citation>
    <scope>SUBUNIT</scope>
</reference>
<reference key="14">
    <citation type="journal article" date="2007" name="Proc. Natl. Acad. Sci. U.S.A.">
        <title>Analysis of phosphorylation sites on proteins from Saccharomyces cerevisiae by electron transfer dissociation (ETD) mass spectrometry.</title>
        <authorList>
            <person name="Chi A."/>
            <person name="Huttenhower C."/>
            <person name="Geer L.Y."/>
            <person name="Coon J.J."/>
            <person name="Syka J.E.P."/>
            <person name="Bai D.L."/>
            <person name="Shabanowitz J."/>
            <person name="Burke D.J."/>
            <person name="Troyanskaya O.G."/>
            <person name="Hunt D.F."/>
        </authorList>
    </citation>
    <scope>PHOSPHORYLATION [LARGE SCALE ANALYSIS] AT SER-258</scope>
    <scope>IDENTIFICATION BY MASS SPECTROMETRY [LARGE SCALE ANALYSIS]</scope>
</reference>
<reference key="15">
    <citation type="journal article" date="2008" name="Mol. Cell. Proteomics">
        <title>A multidimensional chromatography technology for in-depth phosphoproteome analysis.</title>
        <authorList>
            <person name="Albuquerque C.P."/>
            <person name="Smolka M.B."/>
            <person name="Payne S.H."/>
            <person name="Bafna V."/>
            <person name="Eng J."/>
            <person name="Zhou H."/>
        </authorList>
    </citation>
    <scope>PHOSPHORYLATION [LARGE SCALE ANALYSIS] AT THR-60 AND SER-258</scope>
    <scope>IDENTIFICATION BY MASS SPECTROMETRY [LARGE SCALE ANALYSIS]</scope>
</reference>
<reference key="16">
    <citation type="journal article" date="2013" name="J. Biol. Chem.">
        <title>Translation initiation requires cell division cycle 123 (Cdc123) to facilitate biogenesis of the eukaryotic initiation factor 2 (eIF2).</title>
        <authorList>
            <person name="Perzlmaier A.F."/>
            <person name="Richter F."/>
            <person name="Seufert W."/>
        </authorList>
    </citation>
    <scope>IDENTIFICATION IN THE EIF2 COMPLEX</scope>
    <scope>INTERACTION WITH CDC123 AND GCD1</scope>
    <scope>DISRUPTION PHENOTYPE</scope>
    <scope>MUTAGENESIS OF 515-ALA--ALA-527</scope>
</reference>
<reference key="17">
    <citation type="journal article" date="2019" name="EBioMedicine">
        <title>Impaired EIF2S3 function associated with a novel phenotype of X-linked hypopituitarism with glucose dysregulation.</title>
        <authorList>
            <person name="Gregory L.C."/>
            <person name="Ferreira C.B."/>
            <person name="Young-Baird S.K."/>
            <person name="Williams H.J."/>
            <person name="Harakalova M."/>
            <person name="van Haaften G."/>
            <person name="Rahman S.A."/>
            <person name="Gaston-Massuet C."/>
            <person name="Kelberman D."/>
            <person name="Qasim W."/>
            <person name="Camper S.A."/>
            <person name="Dever T.E."/>
            <person name="Shah P."/>
            <person name="Robinson I.C.A.F."/>
            <person name="Dattani M.T."/>
        </authorList>
    </citation>
    <scope>MUTAGENESIS OF ILE-318 AND PRO-490</scope>
</reference>
<reference key="18">
    <citation type="journal article" date="2019" name="Nucleic Acids Res.">
        <title>MEHMO syndrome mutation EIF2S3-I259M impairs initiator Met-tRNAiMet binding to eukaryotic translation initiation factor eIF2.</title>
        <authorList>
            <person name="Young-Baird S.K."/>
            <person name="Shin B.S."/>
            <person name="Dever T.E."/>
        </authorList>
    </citation>
    <scope>FUNCTION</scope>
    <scope>IDENTIFICATION IN THE EIF2 COMPLEX</scope>
    <scope>INTERACTION WITH METHIONYL-INITIATOR METHIONINE TRNA</scope>
    <scope>MUTAGENESIS OF VAL-281 AND ILE-318</scope>
</reference>
<reference key="19">
    <citation type="journal article" date="2020" name="Clin. Genet.">
        <title>Novel pathogenic EIF2S3 missense variants causing clinically variable MEHMO syndrome with impaired eIF2gamma translational function, and literature review.</title>
        <authorList>
            <person name="Kotzaeridou U."/>
            <person name="Young-Baird S.K."/>
            <person name="Suckow V."/>
            <person name="Thornburg A.G."/>
            <person name="Wagner M."/>
            <person name="Harting I."/>
            <person name="Christ S."/>
            <person name="Strom T."/>
            <person name="Dever T.E."/>
            <person name="Kalscheuer V.M."/>
        </authorList>
    </citation>
    <scope>MUTAGENESIS OF THR-203; ILE-218; VAL-281 AND ILE-318</scope>
</reference>
<reference key="20">
    <citation type="journal article" date="2022" name="J. Biol. Chem.">
        <title>Stepwise assembly of the eukaryotic translation initiation factor 2 complex.</title>
        <authorList>
            <person name="Vanselow S."/>
            <person name="Neumann-Arnold L."/>
            <person name="Wojciech-Moock F."/>
            <person name="Seufert W."/>
        </authorList>
    </citation>
    <scope>IDENTIFICATION IN THE EIF2 COMPLEX</scope>
    <scope>INTERACTION WITH CDC123; GCD6 AND GCD7</scope>
    <scope>MUTAGENESIS OF VAL-281; ASP-403 AND 515-ALA--ALA-527</scope>
</reference>
<reference key="21">
    <citation type="journal article" date="2023" name="J. Struct. Biol.">
        <title>Binding of human Cdc123 to eIF2gamma.</title>
        <authorList>
            <person name="Cardenal Peralta C."/>
            <person name="Vandroux P."/>
            <person name="Neumann-Arnold L."/>
            <person name="Panvert M."/>
            <person name="Fagart J."/>
            <person name="Seufert W."/>
            <person name="Mechulam Y."/>
            <person name="Schmitt E."/>
        </authorList>
    </citation>
    <scope>INTERACTION WITH CDC123</scope>
</reference>
<reference key="22">
    <citation type="journal article" date="2014" name="Cell">
        <title>Structural changes enable start codon recognition by the eukaryotic translation initiation complex.</title>
        <authorList>
            <person name="Hussain T."/>
            <person name="Llacer J.L."/>
            <person name="Fernandez I.S."/>
            <person name="Munoz A."/>
            <person name="Martin-Marcos P."/>
            <person name="Savva C.G."/>
            <person name="Lorsch J.R."/>
            <person name="Hinnebusch A.G."/>
            <person name="Ramakrishnan V."/>
        </authorList>
    </citation>
    <scope>STRUCTURE BY ELECTRON MICROSCOPY (4.00 ANGSTROMS)</scope>
</reference>
<reference key="23">
    <citation type="journal article" date="2018" name="Elife">
        <title>Translational initiation factor eIF5 replaces eIF1 on the 40S ribosomal subunit to promote start-codon recognition.</title>
        <authorList>
            <person name="Llacer J.L."/>
            <person name="Hussain T."/>
            <person name="Saini A.K."/>
            <person name="Nanda J.S."/>
            <person name="Kaur S."/>
            <person name="Gordiyenko Y."/>
            <person name="Kumar R."/>
            <person name="Hinnebusch A.G."/>
            <person name="Lorsch J.R."/>
            <person name="Ramakrishnan V."/>
        </authorList>
    </citation>
    <scope>STRUCTURE BY ELECTRON MICROSCOPY (3.05 ANGSTROMS) IN COMPLEX WITH GTP</scope>
</reference>
<reference key="24">
    <citation type="journal article" date="2015" name="Structure">
        <title>Cdc123, a cell cycle regulator needed for eIF2 assembly, is an ATP-grasp protein with unique features.</title>
        <authorList>
            <person name="Panvert M."/>
            <person name="Dubiez E."/>
            <person name="Arnold L."/>
            <person name="Perez J."/>
            <person name="Mechulam Y."/>
            <person name="Seufert W."/>
            <person name="Schmitt E."/>
        </authorList>
    </citation>
    <scope>X-RAY CRYSTALLOGRAPHY (2.90 ANGSTROMS) OF 410-527</scope>
    <scope>INTERACTION WITH CDC123</scope>
    <scope>MUTAGENESIS OF 325-LYS--GLU-331; ARG-504 AND TRP-509</scope>
</reference>
<reference key="25">
    <citation type="journal article" date="2015" name="Mol. Cell">
        <title>Conformational differences between open and closed states of the eukaryotic translation initiation complex.</title>
        <authorList>
            <person name="Llacer J.L."/>
            <person name="Hussain T."/>
            <person name="Marler L."/>
            <person name="Aitken C.E."/>
            <person name="Thakur A."/>
            <person name="Lorsch J.R."/>
            <person name="Hinnebusch A.G."/>
            <person name="Ramakrishnan V."/>
        </authorList>
    </citation>
    <scope>STRUCTURE BY ELECTRON MICROSCOPY (4.90 ANGSTROMS)</scope>
</reference>
<reference key="26">
    <citation type="journal article" date="2019" name="Nat. Commun.">
        <title>The structural basis of translational control by eIF2 phosphorylation.</title>
        <authorList>
            <person name="Adomavicius T."/>
            <person name="Guaita M."/>
            <person name="Zhou Y."/>
            <person name="Jennings M.D."/>
            <person name="Latif Z."/>
            <person name="Roseman A.M."/>
            <person name="Pavitt G.D."/>
        </authorList>
    </citation>
    <scope>STRUCTURE BY ELECTRON MICROSCOPY (3.93 ANGSTROMS)</scope>
</reference>
<reference key="27">
    <citation type="journal article" date="2019" name="Nat. Commun.">
        <title>Structural basis for the inhibition of translation through eIF2alpha phosphorylation.</title>
        <authorList>
            <person name="Gordiyenko Y."/>
            <person name="Llacer J.L."/>
            <person name="Ramakrishnan V."/>
        </authorList>
    </citation>
    <scope>STRUCTURE BY ELECTRON MICROSCOPY (4.20 ANGSTROMS)</scope>
</reference>
<accession>P32481</accession>
<accession>D3DLS4</accession>
<keyword id="KW-0002">3D-structure</keyword>
<keyword id="KW-0963">Cytoplasm</keyword>
<keyword id="KW-0342">GTP-binding</keyword>
<keyword id="KW-0378">Hydrolase</keyword>
<keyword id="KW-0396">Initiation factor</keyword>
<keyword id="KW-0547">Nucleotide-binding</keyword>
<keyword id="KW-0597">Phosphoprotein</keyword>
<keyword id="KW-0648">Protein biosynthesis</keyword>
<keyword id="KW-1185">Reference proteome</keyword>
<comment type="function">
    <text evidence="5 7 8 13 18 19 20 21">As a subunit of eukaryotic initiation factor 2 eIF2, involved in the early steps of protein synthesis. In the presence of GTP, eIF-2 forms a ternary complex with initiator tRNA Met-tRNAi and then recruits the 40S ribosomal complex and initiation factors eIF-1, eIF-1A and eIF-3 to form the 43S pre-initiation complex (43S PIC), a step that determines the rate of protein translation. The 43S PIC binds to mRNA and scans downstream to the initiation codon, where it forms a 48S initiation complex by codon-anticodon base pairing. This leads to the displacement of eIF-1 to allow GTPase-activating protein (GAP) eIF-5-mediated hydrolysis of eIF2-bound GTP. Hydrolysis of GTP and release of Pi, which makes GTP hydrolysis irreversible, causes the release of the eIF-2-GDP binary complex from the 40S subunit, an event that is essential for the subsequent joining of the 60S ribosomal subunit to form an elongation-competent 80S ribosome. In order for eIF-2 to recycle and catalyze another round of initiation, the GDP bound to eIF-2 must be exchanged with GTP by way of a reaction catalyzed by GDP-GTP exchange factor (GEF) eIF-2B.</text>
</comment>
<comment type="catalytic activity">
    <reaction evidence="19">
        <text>GTP + H2O = GDP + phosphate + H(+)</text>
        <dbReference type="Rhea" id="RHEA:19669"/>
        <dbReference type="ChEBI" id="CHEBI:15377"/>
        <dbReference type="ChEBI" id="CHEBI:15378"/>
        <dbReference type="ChEBI" id="CHEBI:37565"/>
        <dbReference type="ChEBI" id="CHEBI:43474"/>
        <dbReference type="ChEBI" id="CHEBI:58189"/>
        <dbReference type="EC" id="3.6.5.3"/>
    </reaction>
</comment>
<comment type="subunit">
    <text evidence="4 9 10 11 13 16 17">Eukaryotic translation initiation factor 2 eIF2 is a heterotrimeric complex composed of an alpha, a beta and a gamma subunit (PubMed:11018020, PubMed:16522633, PubMed:23775072, PubMed:30517694, PubMed:35031321). The factors eIF-1, eIF-1A, eIF-2, eIF-3, TIF5/eIF-5 and methionyl-tRNAi form a multifactor complex (MFC) that may bind to the 40S ribosome (PubMed:11018020, PubMed:16522633). Interacts (via C-terminus) with CDC123; the interaction is direct (PubMed:23775072, PubMed:26211610, PubMed:35031321, PubMed:37507029). Interacts with GCD1 (PubMed:23775072). Interacts with the eIF2B complex subunits GCD6 and GCD7 (PubMed:35031321). Interacts with methionyl-initiator methionine tRNA (PubMed:30517694).</text>
</comment>
<comment type="interaction">
    <interactant intactId="EBI-8924">
        <id>P32481</id>
    </interactant>
    <interactant intactId="EBI-34676">
        <id>Q05791</id>
        <label>CDC123</label>
    </interactant>
    <organismsDiffer>false</organismsDiffer>
    <experiments>11</experiments>
</comment>
<comment type="interaction">
    <interactant intactId="EBI-8924">
        <id>P32481</id>
    </interactant>
    <interactant intactId="EBI-8915">
        <id>P20459</id>
        <label>SUI2</label>
    </interactant>
    <organismsDiffer>false</organismsDiffer>
    <experiments>12</experiments>
</comment>
<comment type="interaction">
    <interactant intactId="EBI-8924">
        <id>P32481</id>
    </interactant>
    <interactant intactId="EBI-8920">
        <id>P09064</id>
        <label>SUI3</label>
    </interactant>
    <organismsDiffer>false</organismsDiffer>
    <experiments>6</experiments>
</comment>
<comment type="interaction">
    <interactant intactId="EBI-8924">
        <id>P32481</id>
    </interactant>
    <interactant intactId="EBI-9038">
        <id>P38431</id>
        <label>TIF5</label>
    </interactant>
    <organismsDiffer>false</organismsDiffer>
    <experiments>4</experiments>
</comment>
<comment type="interaction">
    <interactant intactId="EBI-8924">
        <id>P32481</id>
    </interactant>
    <interactant intactId="EBI-16165908">
        <id>Q9P7N5</id>
        <label>cdc123</label>
    </interactant>
    <organismsDiffer>true</organismsDiffer>
    <experiments>4</experiments>
</comment>
<comment type="subcellular location">
    <subcellularLocation>
        <location evidence="1">Cytoplasm</location>
        <location evidence="1">Cytosol</location>
    </subcellularLocation>
</comment>
<comment type="disruption phenotype">
    <text evidence="10">Inviable.</text>
</comment>
<comment type="miscellaneous">
    <text evidence="6">Present with 20800 molecules/cell in log phase SD medium.</text>
</comment>
<comment type="similarity">
    <text evidence="2">Belongs to the TRAFAC class translation factor GTPase superfamily. Classic translation factor GTPase family. EIF2G subfamily.</text>
</comment>
<sequence length="527" mass="57866">MSDLQDQEPSIIINGNLEPVGEPDIVEETEVVAQETQETQDADKPKKKVAFTGLEEDGETEEEKRKREFEEGGGLPEQPLNPDFSKLNPLSAEIINRQATINIGTIGHVAHGKSTVVRAISGVQTVRFKDELERNITIKLGYANAKIYKCQEPTCPEPDCYRSFKSDKEISPKCQRPGCPGRYKLVRHVSFVDCPGHDILMSTMLSGAAVMDAALLLIAGNESCPQPQTSEHLAAIEIMKLKHVIILQNKVDLMREESALEHQKSILKFIRGTIADGAPIVPISAQLKYNIDAVNEFIVKTIPVPPRDFMISPRLIVIRSFDVNKPGAEIEDLKGGVAGGSILNGVFKLGDEIEIRPGIVTKDDKGKIQCKPIFSNIVSLFAEQNDLKFAVPGGLIGVGTKVDPTLCRADRLVGQVVGAKGHLPNIYTDIEINYFLLRRLLGVKTDGQKQAKVRKLEPNEVLMVNIGSTATGARVVAVKADMARLQLTSPACTEINEKIALSRRIEKHWRLIGWATIKKGTTLEPIA</sequence>
<proteinExistence type="evidence at protein level"/>
<gene>
    <name type="primary">GCD11</name>
    <name type="synonym">SUI4</name>
    <name type="synonym">TIF213</name>
    <name type="ordered locus">YER025W</name>
</gene>
<dbReference type="EC" id="3.6.5.3" evidence="19"/>
<dbReference type="EMBL" id="L04268">
    <property type="protein sequence ID" value="AAA34633.1"/>
    <property type="molecule type" value="Genomic_DNA"/>
</dbReference>
<dbReference type="EMBL" id="U18778">
    <property type="protein sequence ID" value="AAB64558.1"/>
    <property type="molecule type" value="Genomic_DNA"/>
</dbReference>
<dbReference type="EMBL" id="BK006939">
    <property type="protein sequence ID" value="DAA07678.1"/>
    <property type="molecule type" value="Genomic_DNA"/>
</dbReference>
<dbReference type="PIR" id="A48117">
    <property type="entry name" value="A48117"/>
</dbReference>
<dbReference type="RefSeq" id="NP_010942.1">
    <property type="nucleotide sequence ID" value="NM_001178916.1"/>
</dbReference>
<dbReference type="PDB" id="3J81">
    <property type="method" value="EM"/>
    <property type="resolution" value="4.00 A"/>
    <property type="chains" value="k=1-527"/>
</dbReference>
<dbReference type="PDB" id="3JAP">
    <property type="method" value="EM"/>
    <property type="resolution" value="4.90 A"/>
    <property type="chains" value="k=1-527"/>
</dbReference>
<dbReference type="PDB" id="4ZGN">
    <property type="method" value="X-ray"/>
    <property type="resolution" value="2.90 A"/>
    <property type="chains" value="B=410-527"/>
</dbReference>
<dbReference type="PDB" id="4ZGQ">
    <property type="method" value="X-ray"/>
    <property type="resolution" value="3.00 A"/>
    <property type="chains" value="B=410-527"/>
</dbReference>
<dbReference type="PDB" id="6FYX">
    <property type="method" value="EM"/>
    <property type="resolution" value="3.05 A"/>
    <property type="chains" value="k=1-527"/>
</dbReference>
<dbReference type="PDB" id="6FYY">
    <property type="method" value="EM"/>
    <property type="resolution" value="3.05 A"/>
    <property type="chains" value="k=1-527"/>
</dbReference>
<dbReference type="PDB" id="6GSM">
    <property type="method" value="EM"/>
    <property type="resolution" value="5.15 A"/>
    <property type="chains" value="k=90-519"/>
</dbReference>
<dbReference type="PDB" id="6GSN">
    <property type="method" value="EM"/>
    <property type="resolution" value="5.75 A"/>
    <property type="chains" value="k=90-519"/>
</dbReference>
<dbReference type="PDB" id="6I3M">
    <property type="method" value="EM"/>
    <property type="resolution" value="3.93 A"/>
    <property type="chains" value="O/P=1-527"/>
</dbReference>
<dbReference type="PDB" id="6I7T">
    <property type="method" value="EM"/>
    <property type="resolution" value="4.61 A"/>
    <property type="chains" value="O/P=1-527"/>
</dbReference>
<dbReference type="PDB" id="6QG0">
    <property type="method" value="EM"/>
    <property type="resolution" value="4.20 A"/>
    <property type="chains" value="M/N=1-527"/>
</dbReference>
<dbReference type="PDB" id="6QG1">
    <property type="method" value="EM"/>
    <property type="resolution" value="4.20 A"/>
    <property type="chains" value="M/N=1-527"/>
</dbReference>
<dbReference type="PDB" id="6QG2">
    <property type="method" value="EM"/>
    <property type="resolution" value="4.60 A"/>
    <property type="chains" value="M/N=1-527"/>
</dbReference>
<dbReference type="PDB" id="6QG3">
    <property type="method" value="EM"/>
    <property type="resolution" value="9.40 A"/>
    <property type="chains" value="M/N=1-527"/>
</dbReference>
<dbReference type="PDB" id="6QG5">
    <property type="method" value="EM"/>
    <property type="resolution" value="10.10 A"/>
    <property type="chains" value="M/N=1-527"/>
</dbReference>
<dbReference type="PDB" id="6QG6">
    <property type="method" value="EM"/>
    <property type="resolution" value="4.65 A"/>
    <property type="chains" value="M/N=1-527"/>
</dbReference>
<dbReference type="PDB" id="8CAS">
    <property type="method" value="EM"/>
    <property type="resolution" value="3.30 A"/>
    <property type="chains" value="G=1-527"/>
</dbReference>
<dbReference type="PDB" id="8RW1">
    <property type="method" value="EM"/>
    <property type="resolution" value="3.35 A"/>
    <property type="chains" value="k=1-527"/>
</dbReference>
<dbReference type="PDB" id="8S8D">
    <property type="method" value="EM"/>
    <property type="resolution" value="3.45 A"/>
    <property type="chains" value="k=1-527"/>
</dbReference>
<dbReference type="PDB" id="8S8E">
    <property type="method" value="EM"/>
    <property type="resolution" value="3.85 A"/>
    <property type="chains" value="k=1-527"/>
</dbReference>
<dbReference type="PDB" id="8S8F">
    <property type="method" value="EM"/>
    <property type="resolution" value="3.95 A"/>
    <property type="chains" value="k=1-519"/>
</dbReference>
<dbReference type="PDB" id="8S8G">
    <property type="method" value="EM"/>
    <property type="resolution" value="4.00 A"/>
    <property type="chains" value="k=1-527"/>
</dbReference>
<dbReference type="PDB" id="8S8H">
    <property type="method" value="EM"/>
    <property type="resolution" value="4.00 A"/>
    <property type="chains" value="k=1-527"/>
</dbReference>
<dbReference type="PDB" id="8S8I">
    <property type="method" value="EM"/>
    <property type="resolution" value="4.30 A"/>
    <property type="chains" value="k=1-527"/>
</dbReference>
<dbReference type="PDB" id="8S8J">
    <property type="method" value="EM"/>
    <property type="resolution" value="4.70 A"/>
    <property type="chains" value="k=1-527"/>
</dbReference>
<dbReference type="PDB" id="8S8K">
    <property type="method" value="EM"/>
    <property type="resolution" value="4.00 A"/>
    <property type="chains" value="k=1-527"/>
</dbReference>
<dbReference type="PDBsum" id="3J81"/>
<dbReference type="PDBsum" id="3JAP"/>
<dbReference type="PDBsum" id="4ZGN"/>
<dbReference type="PDBsum" id="4ZGQ"/>
<dbReference type="PDBsum" id="6FYX"/>
<dbReference type="PDBsum" id="6FYY"/>
<dbReference type="PDBsum" id="6GSM"/>
<dbReference type="PDBsum" id="6GSN"/>
<dbReference type="PDBsum" id="6I3M"/>
<dbReference type="PDBsum" id="6I7T"/>
<dbReference type="PDBsum" id="6QG0"/>
<dbReference type="PDBsum" id="6QG1"/>
<dbReference type="PDBsum" id="6QG2"/>
<dbReference type="PDBsum" id="6QG3"/>
<dbReference type="PDBsum" id="6QG5"/>
<dbReference type="PDBsum" id="6QG6"/>
<dbReference type="PDBsum" id="8CAS"/>
<dbReference type="PDBsum" id="8RW1"/>
<dbReference type="PDBsum" id="8S8D"/>
<dbReference type="PDBsum" id="8S8E"/>
<dbReference type="PDBsum" id="8S8F"/>
<dbReference type="PDBsum" id="8S8G"/>
<dbReference type="PDBsum" id="8S8H"/>
<dbReference type="PDBsum" id="8S8I"/>
<dbReference type="PDBsum" id="8S8J"/>
<dbReference type="PDBsum" id="8S8K"/>
<dbReference type="EMDB" id="EMD-0057"/>
<dbReference type="EMDB" id="EMD-0058"/>
<dbReference type="EMDB" id="EMD-19541"/>
<dbReference type="EMDB" id="EMD-19801"/>
<dbReference type="EMDB" id="EMD-19802"/>
<dbReference type="EMDB" id="EMD-19803"/>
<dbReference type="EMDB" id="EMD-19804"/>
<dbReference type="EMDB" id="EMD-19805"/>
<dbReference type="EMDB" id="EMD-19806"/>
<dbReference type="EMDB" id="EMD-19807"/>
<dbReference type="EMDB" id="EMD-19808"/>
<dbReference type="EMDB" id="EMD-3050"/>
<dbReference type="EMDB" id="EMD-4327"/>
<dbReference type="EMDB" id="EMD-4328"/>
<dbReference type="EMDB" id="EMD-4404"/>
<dbReference type="EMDB" id="EMD-4428"/>
<dbReference type="EMDB" id="EMD-4543"/>
<dbReference type="EMDB" id="EMD-4544"/>
<dbReference type="EMDB" id="EMD-4545"/>
<dbReference type="EMDB" id="EMD-4546"/>
<dbReference type="EMDB" id="EMD-4547"/>
<dbReference type="EMDB" id="EMD-4548"/>
<dbReference type="SMR" id="P32481"/>
<dbReference type="BioGRID" id="36759">
    <property type="interactions" value="477"/>
</dbReference>
<dbReference type="ComplexPortal" id="CPX-427">
    <property type="entry name" value="Eukaryotic translation initiation factor 2 complex"/>
</dbReference>
<dbReference type="DIP" id="DIP-2561N"/>
<dbReference type="FunCoup" id="P32481">
    <property type="interactions" value="1484"/>
</dbReference>
<dbReference type="IntAct" id="P32481">
    <property type="interactions" value="85"/>
</dbReference>
<dbReference type="MINT" id="P32481"/>
<dbReference type="STRING" id="4932.YER025W"/>
<dbReference type="iPTMnet" id="P32481"/>
<dbReference type="PaxDb" id="4932-YER025W"/>
<dbReference type="PeptideAtlas" id="P32481"/>
<dbReference type="EnsemblFungi" id="YER025W_mRNA">
    <property type="protein sequence ID" value="YER025W"/>
    <property type="gene ID" value="YER025W"/>
</dbReference>
<dbReference type="GeneID" id="856746"/>
<dbReference type="KEGG" id="sce:YER025W"/>
<dbReference type="AGR" id="SGD:S000000827"/>
<dbReference type="SGD" id="S000000827">
    <property type="gene designation" value="GCD11"/>
</dbReference>
<dbReference type="VEuPathDB" id="FungiDB:YER025W"/>
<dbReference type="eggNOG" id="KOG0466">
    <property type="taxonomic scope" value="Eukaryota"/>
</dbReference>
<dbReference type="GeneTree" id="ENSGT00940000172475"/>
<dbReference type="HOGENOM" id="CLU_027154_0_1_1"/>
<dbReference type="InParanoid" id="P32481"/>
<dbReference type="OMA" id="NIGMVGH"/>
<dbReference type="OrthoDB" id="1045173at2759"/>
<dbReference type="BioCyc" id="YEAST:G3O-30207-MONOMER"/>
<dbReference type="Reactome" id="R-SCE-156827">
    <property type="pathway name" value="L13a-mediated translational silencing of Ceruloplasmin expression"/>
</dbReference>
<dbReference type="Reactome" id="R-SCE-382556">
    <property type="pathway name" value="ABC-family proteins mediated transport"/>
</dbReference>
<dbReference type="Reactome" id="R-SCE-72649">
    <property type="pathway name" value="Translation initiation complex formation"/>
</dbReference>
<dbReference type="Reactome" id="R-SCE-72695">
    <property type="pathway name" value="Formation of the ternary complex, and subsequently, the 43S complex"/>
</dbReference>
<dbReference type="Reactome" id="R-SCE-72702">
    <property type="pathway name" value="Ribosomal scanning and start codon recognition"/>
</dbReference>
<dbReference type="Reactome" id="R-SCE-72731">
    <property type="pathway name" value="Recycling of eIF2:GDP"/>
</dbReference>
<dbReference type="Reactome" id="R-SCE-9840373">
    <property type="pathway name" value="Cellular response to mitochondrial stress"/>
</dbReference>
<dbReference type="BioGRID-ORCS" id="856746">
    <property type="hits" value="7 hits in 10 CRISPR screens"/>
</dbReference>
<dbReference type="EvolutionaryTrace" id="P32481"/>
<dbReference type="PRO" id="PR:P32481"/>
<dbReference type="Proteomes" id="UP000002311">
    <property type="component" value="Chromosome V"/>
</dbReference>
<dbReference type="RNAct" id="P32481">
    <property type="molecule type" value="protein"/>
</dbReference>
<dbReference type="GO" id="GO:0005829">
    <property type="term" value="C:cytosol"/>
    <property type="evidence" value="ECO:0007005"/>
    <property type="project" value="SGD"/>
</dbReference>
<dbReference type="GO" id="GO:0016282">
    <property type="term" value="C:eukaryotic 43S preinitiation complex"/>
    <property type="evidence" value="ECO:0000314"/>
    <property type="project" value="SGD"/>
</dbReference>
<dbReference type="GO" id="GO:0033290">
    <property type="term" value="C:eukaryotic 48S preinitiation complex"/>
    <property type="evidence" value="ECO:0000314"/>
    <property type="project" value="SGD"/>
</dbReference>
<dbReference type="GO" id="GO:0005850">
    <property type="term" value="C:eukaryotic translation initiation factor 2 complex"/>
    <property type="evidence" value="ECO:0000315"/>
    <property type="project" value="SGD"/>
</dbReference>
<dbReference type="GO" id="GO:0043614">
    <property type="term" value="C:multi-eIF complex"/>
    <property type="evidence" value="ECO:0000314"/>
    <property type="project" value="SGD"/>
</dbReference>
<dbReference type="GO" id="GO:0005840">
    <property type="term" value="C:ribosome"/>
    <property type="evidence" value="ECO:0000314"/>
    <property type="project" value="ComplexPortal"/>
</dbReference>
<dbReference type="GO" id="GO:0005525">
    <property type="term" value="F:GTP binding"/>
    <property type="evidence" value="ECO:0007669"/>
    <property type="project" value="UniProtKB-KW"/>
</dbReference>
<dbReference type="GO" id="GO:0003924">
    <property type="term" value="F:GTPase activity"/>
    <property type="evidence" value="ECO:0007669"/>
    <property type="project" value="InterPro"/>
</dbReference>
<dbReference type="GO" id="GO:1990856">
    <property type="term" value="F:methionyl-initiator methionine tRNA binding"/>
    <property type="evidence" value="ECO:0000315"/>
    <property type="project" value="UniProtKB"/>
</dbReference>
<dbReference type="GO" id="GO:0003743">
    <property type="term" value="F:translation initiation factor activity"/>
    <property type="evidence" value="ECO:0000315"/>
    <property type="project" value="SGD"/>
</dbReference>
<dbReference type="GO" id="GO:0031369">
    <property type="term" value="F:translation initiation factor binding"/>
    <property type="evidence" value="ECO:0000314"/>
    <property type="project" value="SGD"/>
</dbReference>
<dbReference type="GO" id="GO:0001731">
    <property type="term" value="P:formation of translation preinitiation complex"/>
    <property type="evidence" value="ECO:0000314"/>
    <property type="project" value="SGD"/>
</dbReference>
<dbReference type="GO" id="GO:0045903">
    <property type="term" value="P:positive regulation of translational fidelity"/>
    <property type="evidence" value="ECO:0000315"/>
    <property type="project" value="SGD"/>
</dbReference>
<dbReference type="GO" id="GO:0006413">
    <property type="term" value="P:translational initiation"/>
    <property type="evidence" value="ECO:0000314"/>
    <property type="project" value="ComplexPortal"/>
</dbReference>
<dbReference type="CDD" id="cd01888">
    <property type="entry name" value="eIF2_gamma"/>
    <property type="match status" value="1"/>
</dbReference>
<dbReference type="CDD" id="cd03688">
    <property type="entry name" value="eIF2_gamma_II"/>
    <property type="match status" value="1"/>
</dbReference>
<dbReference type="CDD" id="cd15490">
    <property type="entry name" value="eIF2_gamma_III"/>
    <property type="match status" value="1"/>
</dbReference>
<dbReference type="FunFam" id="2.40.30.10:FF:000009">
    <property type="entry name" value="Eukaryotic translation initiation factor 2 subunit gamma"/>
    <property type="match status" value="1"/>
</dbReference>
<dbReference type="FunFam" id="2.40.30.10:FF:000011">
    <property type="entry name" value="Eukaryotic translation initiation factor 2 subunit gamma"/>
    <property type="match status" value="1"/>
</dbReference>
<dbReference type="FunFam" id="3.40.50.300:FF:000065">
    <property type="entry name" value="Eukaryotic translation initiation factor 2 subunit gamma"/>
    <property type="match status" value="1"/>
</dbReference>
<dbReference type="Gene3D" id="3.40.50.300">
    <property type="entry name" value="P-loop containing nucleotide triphosphate hydrolases"/>
    <property type="match status" value="1"/>
</dbReference>
<dbReference type="Gene3D" id="2.40.30.10">
    <property type="entry name" value="Translation factors"/>
    <property type="match status" value="2"/>
</dbReference>
<dbReference type="InterPro" id="IPR004161">
    <property type="entry name" value="EFTu-like_2"/>
</dbReference>
<dbReference type="InterPro" id="IPR050543">
    <property type="entry name" value="eIF2G"/>
</dbReference>
<dbReference type="InterPro" id="IPR015256">
    <property type="entry name" value="eIF2g_C"/>
</dbReference>
<dbReference type="InterPro" id="IPR044127">
    <property type="entry name" value="eIF2g_dom_2"/>
</dbReference>
<dbReference type="InterPro" id="IPR044128">
    <property type="entry name" value="eIF2g_GTP-bd"/>
</dbReference>
<dbReference type="InterPro" id="IPR027417">
    <property type="entry name" value="P-loop_NTPase"/>
</dbReference>
<dbReference type="InterPro" id="IPR000795">
    <property type="entry name" value="T_Tr_GTP-bd_dom"/>
</dbReference>
<dbReference type="InterPro" id="IPR009000">
    <property type="entry name" value="Transl_B-barrel_sf"/>
</dbReference>
<dbReference type="InterPro" id="IPR009001">
    <property type="entry name" value="Transl_elong_EF1A/Init_IF2_C"/>
</dbReference>
<dbReference type="NCBIfam" id="NF003077">
    <property type="entry name" value="PRK04000.1"/>
    <property type="match status" value="1"/>
</dbReference>
<dbReference type="PANTHER" id="PTHR42854">
    <property type="entry name" value="EUKARYOTIC TRANSLATION INITIATION FACTOR 2 SUBUNIT 3 FAMILY MEMBER"/>
    <property type="match status" value="1"/>
</dbReference>
<dbReference type="PANTHER" id="PTHR42854:SF3">
    <property type="entry name" value="EUKARYOTIC TRANSLATION INITIATION FACTOR 2 SUBUNIT 3-RELATED"/>
    <property type="match status" value="1"/>
</dbReference>
<dbReference type="Pfam" id="PF09173">
    <property type="entry name" value="eIF2_C"/>
    <property type="match status" value="1"/>
</dbReference>
<dbReference type="Pfam" id="PF00009">
    <property type="entry name" value="GTP_EFTU"/>
    <property type="match status" value="1"/>
</dbReference>
<dbReference type="Pfam" id="PF03144">
    <property type="entry name" value="GTP_EFTU_D2"/>
    <property type="match status" value="1"/>
</dbReference>
<dbReference type="PRINTS" id="PR00315">
    <property type="entry name" value="ELONGATNFCT"/>
</dbReference>
<dbReference type="SUPFAM" id="SSF50465">
    <property type="entry name" value="EF-Tu/eEF-1alpha/eIF2-gamma C-terminal domain"/>
    <property type="match status" value="1"/>
</dbReference>
<dbReference type="SUPFAM" id="SSF52540">
    <property type="entry name" value="P-loop containing nucleoside triphosphate hydrolases"/>
    <property type="match status" value="1"/>
</dbReference>
<dbReference type="SUPFAM" id="SSF50447">
    <property type="entry name" value="Translation proteins"/>
    <property type="match status" value="1"/>
</dbReference>
<dbReference type="PROSITE" id="PS51722">
    <property type="entry name" value="G_TR_2"/>
    <property type="match status" value="1"/>
</dbReference>
<name>IF2G_YEAST</name>
<evidence type="ECO:0000250" key="1">
    <source>
        <dbReference type="UniProtKB" id="Q09130"/>
    </source>
</evidence>
<evidence type="ECO:0000255" key="2">
    <source>
        <dbReference type="PROSITE-ProRule" id="PRU01059"/>
    </source>
</evidence>
<evidence type="ECO:0000256" key="3">
    <source>
        <dbReference type="SAM" id="MobiDB-lite"/>
    </source>
</evidence>
<evidence type="ECO:0000269" key="4">
    <source>
    </source>
</evidence>
<evidence type="ECO:0000269" key="5">
    <source>
    </source>
</evidence>
<evidence type="ECO:0000269" key="6">
    <source>
    </source>
</evidence>
<evidence type="ECO:0000269" key="7">
    <source>
    </source>
</evidence>
<evidence type="ECO:0000269" key="8">
    <source>
    </source>
</evidence>
<evidence type="ECO:0000269" key="9">
    <source>
    </source>
</evidence>
<evidence type="ECO:0000269" key="10">
    <source>
    </source>
</evidence>
<evidence type="ECO:0000269" key="11">
    <source>
    </source>
</evidence>
<evidence type="ECO:0000269" key="12">
    <source>
    </source>
</evidence>
<evidence type="ECO:0000269" key="13">
    <source>
    </source>
</evidence>
<evidence type="ECO:0000269" key="14">
    <source>
    </source>
</evidence>
<evidence type="ECO:0000269" key="15">
    <source>
    </source>
</evidence>
<evidence type="ECO:0000269" key="16">
    <source>
    </source>
</evidence>
<evidence type="ECO:0000269" key="17">
    <source>
    </source>
</evidence>
<evidence type="ECO:0000269" key="18">
    <source>
    </source>
</evidence>
<evidence type="ECO:0000269" key="19">
    <source>
    </source>
</evidence>
<evidence type="ECO:0000269" key="20">
    <source>
    </source>
</evidence>
<evidence type="ECO:0000269" key="21">
    <source>
    </source>
</evidence>
<evidence type="ECO:0007744" key="22">
    <source>
    </source>
</evidence>
<evidence type="ECO:0007744" key="23">
    <source>
    </source>
</evidence>
<evidence type="ECO:0007829" key="24">
    <source>
        <dbReference type="PDB" id="4ZGN"/>
    </source>
</evidence>
<evidence type="ECO:0007829" key="25">
    <source>
        <dbReference type="PDB" id="8CAS"/>
    </source>
</evidence>
<evidence type="ECO:0007829" key="26">
    <source>
        <dbReference type="PDB" id="8RW1"/>
    </source>
</evidence>
<evidence type="ECO:0007829" key="27">
    <source>
        <dbReference type="PDB" id="8S8D"/>
    </source>
</evidence>